<protein>
    <recommendedName>
        <fullName evidence="2">Small ribosomal subunit protein eS25</fullName>
    </recommendedName>
    <alternativeName>
        <fullName>30S ribosomal protein S25e</fullName>
    </alternativeName>
</protein>
<gene>
    <name type="primary">rps25e</name>
    <name type="ordered locus">STK_03720</name>
</gene>
<evidence type="ECO:0000256" key="1">
    <source>
        <dbReference type="SAM" id="MobiDB-lite"/>
    </source>
</evidence>
<evidence type="ECO:0000305" key="2"/>
<name>RS25_SULTO</name>
<proteinExistence type="inferred from homology"/>
<keyword id="KW-1185">Reference proteome</keyword>
<keyword id="KW-0687">Ribonucleoprotein</keyword>
<keyword id="KW-0689">Ribosomal protein</keyword>
<dbReference type="EMBL" id="BA000023">
    <property type="protein sequence ID" value="BAB65352.1"/>
    <property type="molecule type" value="Genomic_DNA"/>
</dbReference>
<dbReference type="RefSeq" id="WP_010978335.1">
    <property type="nucleotide sequence ID" value="NC_003106.2"/>
</dbReference>
<dbReference type="SMR" id="Q975P8"/>
<dbReference type="STRING" id="273063.STK_03720"/>
<dbReference type="KEGG" id="sto:STK_03720"/>
<dbReference type="PATRIC" id="fig|273063.9.peg.433"/>
<dbReference type="eggNOG" id="arCOG04327">
    <property type="taxonomic scope" value="Archaea"/>
</dbReference>
<dbReference type="OrthoDB" id="43999at2157"/>
<dbReference type="Proteomes" id="UP000001015">
    <property type="component" value="Chromosome"/>
</dbReference>
<dbReference type="GO" id="GO:1990904">
    <property type="term" value="C:ribonucleoprotein complex"/>
    <property type="evidence" value="ECO:0007669"/>
    <property type="project" value="UniProtKB-KW"/>
</dbReference>
<dbReference type="GO" id="GO:0005840">
    <property type="term" value="C:ribosome"/>
    <property type="evidence" value="ECO:0007669"/>
    <property type="project" value="UniProtKB-KW"/>
</dbReference>
<dbReference type="Gene3D" id="3.30.63.20">
    <property type="match status" value="1"/>
</dbReference>
<dbReference type="InterPro" id="IPR004977">
    <property type="entry name" value="Ribosomal_eS25"/>
</dbReference>
<dbReference type="NCBIfam" id="NF006812">
    <property type="entry name" value="PRK09334.1-2"/>
    <property type="match status" value="1"/>
</dbReference>
<dbReference type="NCBIfam" id="NF006814">
    <property type="entry name" value="PRK09334.1-4"/>
    <property type="match status" value="1"/>
</dbReference>
<dbReference type="PANTHER" id="PTHR12850">
    <property type="entry name" value="40S RIBOSOMAL PROTEIN S25"/>
    <property type="match status" value="1"/>
</dbReference>
<dbReference type="Pfam" id="PF03297">
    <property type="entry name" value="Ribosomal_S25"/>
    <property type="match status" value="1"/>
</dbReference>
<feature type="chain" id="PRO_0000192894" description="Small ribosomal subunit protein eS25">
    <location>
        <begin position="1"/>
        <end position="109"/>
    </location>
</feature>
<feature type="region of interest" description="Disordered" evidence="1">
    <location>
        <begin position="1"/>
        <end position="36"/>
    </location>
</feature>
<feature type="compositionally biased region" description="Basic and acidic residues" evidence="1">
    <location>
        <begin position="12"/>
        <end position="25"/>
    </location>
</feature>
<comment type="similarity">
    <text evidence="2">Belongs to the eukaryotic ribosomal protein eS25 family.</text>
</comment>
<organism>
    <name type="scientific">Sulfurisphaera tokodaii (strain DSM 16993 / JCM 10545 / NBRC 100140 / 7)</name>
    <name type="common">Sulfolobus tokodaii</name>
    <dbReference type="NCBI Taxonomy" id="273063"/>
    <lineage>
        <taxon>Archaea</taxon>
        <taxon>Thermoproteota</taxon>
        <taxon>Thermoprotei</taxon>
        <taxon>Sulfolobales</taxon>
        <taxon>Sulfolobaceae</taxon>
        <taxon>Sulfurisphaera</taxon>
    </lineage>
</organism>
<reference key="1">
    <citation type="journal article" date="2001" name="DNA Res.">
        <title>Complete genome sequence of an aerobic thermoacidophilic Crenarchaeon, Sulfolobus tokodaii strain7.</title>
        <authorList>
            <person name="Kawarabayasi Y."/>
            <person name="Hino Y."/>
            <person name="Horikawa H."/>
            <person name="Jin-no K."/>
            <person name="Takahashi M."/>
            <person name="Sekine M."/>
            <person name="Baba S."/>
            <person name="Ankai A."/>
            <person name="Kosugi H."/>
            <person name="Hosoyama A."/>
            <person name="Fukui S."/>
            <person name="Nagai Y."/>
            <person name="Nishijima K."/>
            <person name="Otsuka R."/>
            <person name="Nakazawa H."/>
            <person name="Takamiya M."/>
            <person name="Kato Y."/>
            <person name="Yoshizawa T."/>
            <person name="Tanaka T."/>
            <person name="Kudoh Y."/>
            <person name="Yamazaki J."/>
            <person name="Kushida N."/>
            <person name="Oguchi A."/>
            <person name="Aoki K."/>
            <person name="Masuda S."/>
            <person name="Yanagii M."/>
            <person name="Nishimura M."/>
            <person name="Yamagishi A."/>
            <person name="Oshima T."/>
            <person name="Kikuchi H."/>
        </authorList>
    </citation>
    <scope>NUCLEOTIDE SEQUENCE [LARGE SCALE GENOMIC DNA]</scope>
    <source>
        <strain>DSM 16993 / JCM 10545 / NBRC 100140 / 7</strain>
    </source>
</reference>
<accession>Q975P8</accession>
<sequence>MGGASKKPISTVEKRMKKMAEEQQKKQQKRATTKTGKELTSKNVVIDNETLKKVQEELKKETIVTPYTLSTKLNVTISVAKKILEELERQGVVKIGTKDRRTAVYIAAS</sequence>